<keyword id="KW-0007">Acetylation</keyword>
<keyword id="KW-0028">Amino-acid biosynthesis</keyword>
<keyword id="KW-0963">Cytoplasm</keyword>
<keyword id="KW-0521">NADP</keyword>
<keyword id="KW-0560">Oxidoreductase</keyword>
<keyword id="KW-0641">Proline biosynthesis</keyword>
<keyword id="KW-1185">Reference proteome</keyword>
<dbReference type="EC" id="1.5.1.2" evidence="2"/>
<dbReference type="EMBL" id="AB169713">
    <property type="protein sequence ID" value="BAE01794.1"/>
    <property type="molecule type" value="mRNA"/>
</dbReference>
<dbReference type="SMR" id="Q4R531"/>
<dbReference type="STRING" id="9541.ENSMFAP00000014445"/>
<dbReference type="eggNOG" id="KOG3124">
    <property type="taxonomic scope" value="Eukaryota"/>
</dbReference>
<dbReference type="UniPathway" id="UPA00098">
    <property type="reaction ID" value="UER00361"/>
</dbReference>
<dbReference type="Proteomes" id="UP000233100">
    <property type="component" value="Unplaced"/>
</dbReference>
<dbReference type="GO" id="GO:0005829">
    <property type="term" value="C:cytosol"/>
    <property type="evidence" value="ECO:0000250"/>
    <property type="project" value="UniProtKB"/>
</dbReference>
<dbReference type="GO" id="GO:0004735">
    <property type="term" value="F:pyrroline-5-carboxylate reductase activity"/>
    <property type="evidence" value="ECO:0000250"/>
    <property type="project" value="UniProtKB"/>
</dbReference>
<dbReference type="GO" id="GO:0055129">
    <property type="term" value="P:L-proline biosynthetic process"/>
    <property type="evidence" value="ECO:0000250"/>
    <property type="project" value="UniProtKB"/>
</dbReference>
<dbReference type="FunFam" id="3.40.50.720:FF:000367">
    <property type="entry name" value="Pyrroline-5-carboxylate reductase"/>
    <property type="match status" value="1"/>
</dbReference>
<dbReference type="FunFam" id="1.10.3730.10:FF:000003">
    <property type="entry name" value="Pyrroline-5-carboxylate reductase 1, mitochondrial"/>
    <property type="match status" value="1"/>
</dbReference>
<dbReference type="Gene3D" id="3.40.50.720">
    <property type="entry name" value="NAD(P)-binding Rossmann-like Domain"/>
    <property type="match status" value="1"/>
</dbReference>
<dbReference type="Gene3D" id="1.10.3730.10">
    <property type="entry name" value="ProC C-terminal domain-like"/>
    <property type="match status" value="1"/>
</dbReference>
<dbReference type="HAMAP" id="MF_01925">
    <property type="entry name" value="P5C_reductase"/>
    <property type="match status" value="1"/>
</dbReference>
<dbReference type="InterPro" id="IPR008927">
    <property type="entry name" value="6-PGluconate_DH-like_C_sf"/>
</dbReference>
<dbReference type="InterPro" id="IPR036291">
    <property type="entry name" value="NAD(P)-bd_dom_sf"/>
</dbReference>
<dbReference type="InterPro" id="IPR028939">
    <property type="entry name" value="P5C_Rdtase_cat_N"/>
</dbReference>
<dbReference type="InterPro" id="IPR053790">
    <property type="entry name" value="P5CR-like_CS"/>
</dbReference>
<dbReference type="InterPro" id="IPR029036">
    <property type="entry name" value="P5CR_dimer"/>
</dbReference>
<dbReference type="InterPro" id="IPR000304">
    <property type="entry name" value="Pyrroline-COOH_reductase"/>
</dbReference>
<dbReference type="NCBIfam" id="TIGR00112">
    <property type="entry name" value="proC"/>
    <property type="match status" value="1"/>
</dbReference>
<dbReference type="PANTHER" id="PTHR11645">
    <property type="entry name" value="PYRROLINE-5-CARBOXYLATE REDUCTASE"/>
    <property type="match status" value="1"/>
</dbReference>
<dbReference type="PANTHER" id="PTHR11645:SF0">
    <property type="entry name" value="PYRROLINE-5-CARBOXYLATE REDUCTASE 3"/>
    <property type="match status" value="1"/>
</dbReference>
<dbReference type="Pfam" id="PF03807">
    <property type="entry name" value="F420_oxidored"/>
    <property type="match status" value="1"/>
</dbReference>
<dbReference type="Pfam" id="PF14748">
    <property type="entry name" value="P5CR_dimer"/>
    <property type="match status" value="1"/>
</dbReference>
<dbReference type="PIRSF" id="PIRSF000193">
    <property type="entry name" value="Pyrrol-5-carb_rd"/>
    <property type="match status" value="1"/>
</dbReference>
<dbReference type="SUPFAM" id="SSF48179">
    <property type="entry name" value="6-phosphogluconate dehydrogenase C-terminal domain-like"/>
    <property type="match status" value="1"/>
</dbReference>
<dbReference type="SUPFAM" id="SSF51735">
    <property type="entry name" value="NAD(P)-binding Rossmann-fold domains"/>
    <property type="match status" value="1"/>
</dbReference>
<dbReference type="PROSITE" id="PS00521">
    <property type="entry name" value="P5CR"/>
    <property type="match status" value="1"/>
</dbReference>
<proteinExistence type="evidence at transcript level"/>
<protein>
    <recommendedName>
        <fullName evidence="2">Pyrroline-5-carboxylate reductase 3</fullName>
        <shortName>P5C reductase 3</shortName>
        <shortName>P5CR 3</shortName>
        <ecNumber evidence="2">1.5.1.2</ecNumber>
    </recommendedName>
    <alternativeName>
        <fullName>Pyrroline-5-carboxylate reductase-like protein</fullName>
    </alternativeName>
</protein>
<organism>
    <name type="scientific">Macaca fascicularis</name>
    <name type="common">Crab-eating macaque</name>
    <name type="synonym">Cynomolgus monkey</name>
    <dbReference type="NCBI Taxonomy" id="9541"/>
    <lineage>
        <taxon>Eukaryota</taxon>
        <taxon>Metazoa</taxon>
        <taxon>Chordata</taxon>
        <taxon>Craniata</taxon>
        <taxon>Vertebrata</taxon>
        <taxon>Euteleostomi</taxon>
        <taxon>Mammalia</taxon>
        <taxon>Eutheria</taxon>
        <taxon>Euarchontoglires</taxon>
        <taxon>Primates</taxon>
        <taxon>Haplorrhini</taxon>
        <taxon>Catarrhini</taxon>
        <taxon>Cercopithecidae</taxon>
        <taxon>Cercopithecinae</taxon>
        <taxon>Macaca</taxon>
    </lineage>
</organism>
<sequence length="274" mass="28558">MAAAGSATRRVGFVGAGRMAGAIAQGLIRAGKVEAQRIVASAPTDRNLCHFQALGCQTTHSNQEVLQSCLLVIFATKPHILPAVVAEVAPVVTAEHILVSVAAGVSLSTLEELLPPNTRVLRVLPNLPCVVQEGAIVMARGRHVGSSETKLLQHLLEACGRCEEVPEAYVDIHTGLSGSGVAFVCAFSEALAEGAIKMGMPSSLAHRIAAQTLLGTAKMLLHEGQHPAQLRSDVCTPGGTTIYGLHALEQGGLRAATMSAVEAATCRARELSRK</sequence>
<evidence type="ECO:0000250" key="1"/>
<evidence type="ECO:0000250" key="2">
    <source>
        <dbReference type="UniProtKB" id="Q53H96"/>
    </source>
</evidence>
<evidence type="ECO:0000305" key="3"/>
<name>P5CR3_MACFA</name>
<reference key="1">
    <citation type="submission" date="2005-06" db="EMBL/GenBank/DDBJ databases">
        <title>DNA sequences of macaque genes expressed in brain or testis and its evolutionary implications.</title>
        <authorList>
            <consortium name="International consortium for macaque cDNA sequencing and analysis"/>
        </authorList>
    </citation>
    <scope>NUCLEOTIDE SEQUENCE [LARGE SCALE MRNA]</scope>
    <source>
        <tissue>Brain cortex</tissue>
    </source>
</reference>
<comment type="function">
    <text evidence="2">Oxidoreductase that catalyzes the last step in proline biosynthesis, which corresponds to the reduction of pyrroline-5-carboxylate (P5C) to L-proline using NAD(P)H. Proline is synthesized from either glutamate or ornithine; both are converted to P5C, and then to proline via pyrroline-5-carboxylate reductases (PYCRs). PYCR3 is exclusively linked to the biosynthesis of proline from ornithine.</text>
</comment>
<comment type="catalytic activity">
    <reaction evidence="2">
        <text>L-proline + NADP(+) = (S)-1-pyrroline-5-carboxylate + NADPH + 2 H(+)</text>
        <dbReference type="Rhea" id="RHEA:14109"/>
        <dbReference type="ChEBI" id="CHEBI:15378"/>
        <dbReference type="ChEBI" id="CHEBI:17388"/>
        <dbReference type="ChEBI" id="CHEBI:57783"/>
        <dbReference type="ChEBI" id="CHEBI:58349"/>
        <dbReference type="ChEBI" id="CHEBI:60039"/>
        <dbReference type="EC" id="1.5.1.2"/>
    </reaction>
    <physiologicalReaction direction="right-to-left" evidence="2">
        <dbReference type="Rhea" id="RHEA:14111"/>
    </physiologicalReaction>
</comment>
<comment type="catalytic activity">
    <reaction evidence="2">
        <text>L-proline + NAD(+) = (S)-1-pyrroline-5-carboxylate + NADH + 2 H(+)</text>
        <dbReference type="Rhea" id="RHEA:14105"/>
        <dbReference type="ChEBI" id="CHEBI:15378"/>
        <dbReference type="ChEBI" id="CHEBI:17388"/>
        <dbReference type="ChEBI" id="CHEBI:57540"/>
        <dbReference type="ChEBI" id="CHEBI:57945"/>
        <dbReference type="ChEBI" id="CHEBI:60039"/>
        <dbReference type="EC" id="1.5.1.2"/>
    </reaction>
    <physiologicalReaction direction="right-to-left" evidence="2">
        <dbReference type="Rhea" id="RHEA:14107"/>
    </physiologicalReaction>
</comment>
<comment type="pathway">
    <text evidence="2">Amino-acid biosynthesis; L-proline biosynthesis; L-proline from L-glutamate 5-semialdehyde: step 1/1.</text>
</comment>
<comment type="subunit">
    <text evidence="1">Homodecamer; composed of 5 homodimers.</text>
</comment>
<comment type="subcellular location">
    <subcellularLocation>
        <location evidence="2">Cytoplasm</location>
    </subcellularLocation>
</comment>
<comment type="similarity">
    <text evidence="3">Belongs to the pyrroline-5-carboxylate reductase family.</text>
</comment>
<accession>Q4R531</accession>
<feature type="initiator methionine" description="Removed" evidence="2">
    <location>
        <position position="1"/>
    </location>
</feature>
<feature type="chain" id="PRO_0000324562" description="Pyrroline-5-carboxylate reductase 3">
    <location>
        <begin position="2"/>
        <end position="274"/>
    </location>
</feature>
<feature type="modified residue" description="N-acetylalanine" evidence="2">
    <location>
        <position position="2"/>
    </location>
</feature>
<gene>
    <name evidence="2" type="primary">PYCR3</name>
    <name type="synonym">PYCRL</name>
    <name type="ORF">QccE-21944</name>
</gene>